<evidence type="ECO:0000255" key="1">
    <source>
        <dbReference type="HAMAP-Rule" id="MF_00036"/>
    </source>
</evidence>
<protein>
    <recommendedName>
        <fullName evidence="1">Alanine--tRNA ligase</fullName>
        <ecNumber evidence="1">6.1.1.7</ecNumber>
    </recommendedName>
    <alternativeName>
        <fullName evidence="1">Alanyl-tRNA synthetase</fullName>
        <shortName evidence="1">AlaRS</shortName>
    </alternativeName>
</protein>
<feature type="chain" id="PRO_0000347848" description="Alanine--tRNA ligase">
    <location>
        <begin position="1"/>
        <end position="877"/>
    </location>
</feature>
<feature type="binding site" evidence="1">
    <location>
        <position position="563"/>
    </location>
    <ligand>
        <name>Zn(2+)</name>
        <dbReference type="ChEBI" id="CHEBI:29105"/>
    </ligand>
</feature>
<feature type="binding site" evidence="1">
    <location>
        <position position="567"/>
    </location>
    <ligand>
        <name>Zn(2+)</name>
        <dbReference type="ChEBI" id="CHEBI:29105"/>
    </ligand>
</feature>
<feature type="binding site" evidence="1">
    <location>
        <position position="665"/>
    </location>
    <ligand>
        <name>Zn(2+)</name>
        <dbReference type="ChEBI" id="CHEBI:29105"/>
    </ligand>
</feature>
<feature type="binding site" evidence="1">
    <location>
        <position position="669"/>
    </location>
    <ligand>
        <name>Zn(2+)</name>
        <dbReference type="ChEBI" id="CHEBI:29105"/>
    </ligand>
</feature>
<reference key="1">
    <citation type="submission" date="2008-01" db="EMBL/GenBank/DDBJ databases">
        <title>Complete sequence of Thermoanaerobacter sp. X514.</title>
        <authorList>
            <consortium name="US DOE Joint Genome Institute"/>
            <person name="Copeland A."/>
            <person name="Lucas S."/>
            <person name="Lapidus A."/>
            <person name="Barry K."/>
            <person name="Glavina del Rio T."/>
            <person name="Dalin E."/>
            <person name="Tice H."/>
            <person name="Pitluck S."/>
            <person name="Bruce D."/>
            <person name="Goodwin L."/>
            <person name="Saunders E."/>
            <person name="Brettin T."/>
            <person name="Detter J.C."/>
            <person name="Han C."/>
            <person name="Schmutz J."/>
            <person name="Larimer F."/>
            <person name="Land M."/>
            <person name="Hauser L."/>
            <person name="Kyrpides N."/>
            <person name="Kim E."/>
            <person name="Hemme C."/>
            <person name="Fields M.W."/>
            <person name="He Z."/>
            <person name="Zhou J."/>
            <person name="Richardson P."/>
        </authorList>
    </citation>
    <scope>NUCLEOTIDE SEQUENCE [LARGE SCALE GENOMIC DNA]</scope>
    <source>
        <strain>X514</strain>
    </source>
</reference>
<gene>
    <name evidence="1" type="primary">alaS</name>
    <name type="ordered locus">Teth514_1489</name>
</gene>
<name>SYA_THEPX</name>
<comment type="function">
    <text evidence="1">Catalyzes the attachment of alanine to tRNA(Ala) in a two-step reaction: alanine is first activated by ATP to form Ala-AMP and then transferred to the acceptor end of tRNA(Ala). Also edits incorrectly charged Ser-tRNA(Ala) and Gly-tRNA(Ala) via its editing domain.</text>
</comment>
<comment type="catalytic activity">
    <reaction evidence="1">
        <text>tRNA(Ala) + L-alanine + ATP = L-alanyl-tRNA(Ala) + AMP + diphosphate</text>
        <dbReference type="Rhea" id="RHEA:12540"/>
        <dbReference type="Rhea" id="RHEA-COMP:9657"/>
        <dbReference type="Rhea" id="RHEA-COMP:9923"/>
        <dbReference type="ChEBI" id="CHEBI:30616"/>
        <dbReference type="ChEBI" id="CHEBI:33019"/>
        <dbReference type="ChEBI" id="CHEBI:57972"/>
        <dbReference type="ChEBI" id="CHEBI:78442"/>
        <dbReference type="ChEBI" id="CHEBI:78497"/>
        <dbReference type="ChEBI" id="CHEBI:456215"/>
        <dbReference type="EC" id="6.1.1.7"/>
    </reaction>
</comment>
<comment type="cofactor">
    <cofactor evidence="1">
        <name>Zn(2+)</name>
        <dbReference type="ChEBI" id="CHEBI:29105"/>
    </cofactor>
    <text evidence="1">Binds 1 zinc ion per subunit.</text>
</comment>
<comment type="subcellular location">
    <subcellularLocation>
        <location evidence="1">Cytoplasm</location>
    </subcellularLocation>
</comment>
<comment type="domain">
    <text evidence="1">Consists of three domains; the N-terminal catalytic domain, the editing domain and the C-terminal C-Ala domain. The editing domain removes incorrectly charged amino acids, while the C-Ala domain, along with tRNA(Ala), serves as a bridge to cooperatively bring together the editing and aminoacylation centers thus stimulating deacylation of misacylated tRNAs.</text>
</comment>
<comment type="similarity">
    <text evidence="1">Belongs to the class-II aminoacyl-tRNA synthetase family.</text>
</comment>
<sequence>MEKLGMNEIREKFLSFFESKGHLRLPSFSLIPKNDKSLLLINSGMAPLKPYFTGKETPPSKRVTTCQRCIRTPDIERVGKTARHGTFFEMLGNFSFGDYFKKEAIPWAWEFVTEVLGLPVNRLWVSIYEEDDEAFEIWNKIVGLPPERIVRMGKEDNFWEIGTGPCGPSSEIYFDRGEEKGCGKPTCGVGCDCDRFIEFWNLVFTQFNKDEQGNYHRLPNPNIDTGMGLERIATIMQGVDSIFDVDVIRGITNFVSQIAEVEYGKDAEKDVSLRVITDHIRGITFMISDGILPSNEGRGYVLRRLLRRAARHGKLLGINDTFLYRVVDSVVENYGEAYPEIIDRKDYIKRIVKLEEERFKETIDQGLTILQDYINELKVQGKTVLEGSKAFKLYDTYGFPLDLTKEILQEAGITVDEEGYTKELEKQRIRARSSRKEDNSLWEQDIYSTLGDIKTKFVGYDTYESNSKVLAIVKDEELVEEAEAGDDVSIILDVTPFYAESGGQIGDNGILENENVLIKVKDCKKVGDRFIHIGTIERGLISVRDEVKAQIDVVSRRNAARNHTATHLLHKALKEILGDHVHQAGSLVADDRLRFDFSHYQAVTKEELKQIENRVNEKIYQSLNVHIEEKTYDEAVKEGAVALFTEKYGDKVRVVKIDDYSMELCGGTHVKNTNEIGIFKIVSESAVGAGLRRIEALTGLAAIKYLEEKEEILKEASDLLKAQDKEIVSKIESLQQVLKTKDKEIEQLKIKMASILANSLINSAISLDGIKVVVSKVEDYDSEALKALGDILKDKLKTAAIVLASSTPEKAIFVGMATKDVVQKGINMGAVIKEVCKVSEGNGGGRPDMAQGTGKNPSKVEEALNKAIDIVKEQLKN</sequence>
<organism>
    <name type="scientific">Thermoanaerobacter sp. (strain X514)</name>
    <dbReference type="NCBI Taxonomy" id="399726"/>
    <lineage>
        <taxon>Bacteria</taxon>
        <taxon>Bacillati</taxon>
        <taxon>Bacillota</taxon>
        <taxon>Clostridia</taxon>
        <taxon>Thermoanaerobacterales</taxon>
        <taxon>Thermoanaerobacteraceae</taxon>
        <taxon>Thermoanaerobacter</taxon>
    </lineage>
</organism>
<accession>B0K0Q1</accession>
<dbReference type="EC" id="6.1.1.7" evidence="1"/>
<dbReference type="EMBL" id="CP000923">
    <property type="protein sequence ID" value="ABY92776.1"/>
    <property type="molecule type" value="Genomic_DNA"/>
</dbReference>
<dbReference type="RefSeq" id="WP_009052311.1">
    <property type="nucleotide sequence ID" value="NC_010320.1"/>
</dbReference>
<dbReference type="SMR" id="B0K0Q1"/>
<dbReference type="KEGG" id="tex:Teth514_1489"/>
<dbReference type="HOGENOM" id="CLU_004485_1_1_9"/>
<dbReference type="Proteomes" id="UP000002155">
    <property type="component" value="Chromosome"/>
</dbReference>
<dbReference type="GO" id="GO:0005829">
    <property type="term" value="C:cytosol"/>
    <property type="evidence" value="ECO:0007669"/>
    <property type="project" value="TreeGrafter"/>
</dbReference>
<dbReference type="GO" id="GO:0004813">
    <property type="term" value="F:alanine-tRNA ligase activity"/>
    <property type="evidence" value="ECO:0007669"/>
    <property type="project" value="UniProtKB-UniRule"/>
</dbReference>
<dbReference type="GO" id="GO:0002161">
    <property type="term" value="F:aminoacyl-tRNA deacylase activity"/>
    <property type="evidence" value="ECO:0007669"/>
    <property type="project" value="TreeGrafter"/>
</dbReference>
<dbReference type="GO" id="GO:0005524">
    <property type="term" value="F:ATP binding"/>
    <property type="evidence" value="ECO:0007669"/>
    <property type="project" value="UniProtKB-UniRule"/>
</dbReference>
<dbReference type="GO" id="GO:0140096">
    <property type="term" value="F:catalytic activity, acting on a protein"/>
    <property type="evidence" value="ECO:0007669"/>
    <property type="project" value="UniProtKB-ARBA"/>
</dbReference>
<dbReference type="GO" id="GO:0016740">
    <property type="term" value="F:transferase activity"/>
    <property type="evidence" value="ECO:0007669"/>
    <property type="project" value="UniProtKB-ARBA"/>
</dbReference>
<dbReference type="GO" id="GO:0000049">
    <property type="term" value="F:tRNA binding"/>
    <property type="evidence" value="ECO:0007669"/>
    <property type="project" value="UniProtKB-KW"/>
</dbReference>
<dbReference type="GO" id="GO:0008270">
    <property type="term" value="F:zinc ion binding"/>
    <property type="evidence" value="ECO:0007669"/>
    <property type="project" value="UniProtKB-UniRule"/>
</dbReference>
<dbReference type="GO" id="GO:0006419">
    <property type="term" value="P:alanyl-tRNA aminoacylation"/>
    <property type="evidence" value="ECO:0007669"/>
    <property type="project" value="UniProtKB-UniRule"/>
</dbReference>
<dbReference type="CDD" id="cd00673">
    <property type="entry name" value="AlaRS_core"/>
    <property type="match status" value="1"/>
</dbReference>
<dbReference type="FunFam" id="2.40.30.130:FF:000001">
    <property type="entry name" value="Alanine--tRNA ligase"/>
    <property type="match status" value="1"/>
</dbReference>
<dbReference type="FunFam" id="3.10.310.40:FF:000001">
    <property type="entry name" value="Alanine--tRNA ligase"/>
    <property type="match status" value="1"/>
</dbReference>
<dbReference type="FunFam" id="3.30.54.20:FF:000001">
    <property type="entry name" value="Alanine--tRNA ligase"/>
    <property type="match status" value="1"/>
</dbReference>
<dbReference type="FunFam" id="3.30.930.10:FF:000004">
    <property type="entry name" value="Alanine--tRNA ligase"/>
    <property type="match status" value="1"/>
</dbReference>
<dbReference type="FunFam" id="3.30.980.10:FF:000004">
    <property type="entry name" value="Alanine--tRNA ligase, cytoplasmic"/>
    <property type="match status" value="1"/>
</dbReference>
<dbReference type="Gene3D" id="2.40.30.130">
    <property type="match status" value="1"/>
</dbReference>
<dbReference type="Gene3D" id="3.10.310.40">
    <property type="match status" value="1"/>
</dbReference>
<dbReference type="Gene3D" id="3.30.54.20">
    <property type="match status" value="1"/>
</dbReference>
<dbReference type="Gene3D" id="6.10.250.550">
    <property type="match status" value="1"/>
</dbReference>
<dbReference type="Gene3D" id="3.30.930.10">
    <property type="entry name" value="Bira Bifunctional Protein, Domain 2"/>
    <property type="match status" value="1"/>
</dbReference>
<dbReference type="Gene3D" id="3.30.980.10">
    <property type="entry name" value="Threonyl-trna Synthetase, Chain A, domain 2"/>
    <property type="match status" value="1"/>
</dbReference>
<dbReference type="HAMAP" id="MF_00036_B">
    <property type="entry name" value="Ala_tRNA_synth_B"/>
    <property type="match status" value="1"/>
</dbReference>
<dbReference type="InterPro" id="IPR045864">
    <property type="entry name" value="aa-tRNA-synth_II/BPL/LPL"/>
</dbReference>
<dbReference type="InterPro" id="IPR002318">
    <property type="entry name" value="Ala-tRNA-lgiase_IIc"/>
</dbReference>
<dbReference type="InterPro" id="IPR018162">
    <property type="entry name" value="Ala-tRNA-ligase_IIc_anticod-bd"/>
</dbReference>
<dbReference type="InterPro" id="IPR018165">
    <property type="entry name" value="Ala-tRNA-synth_IIc_core"/>
</dbReference>
<dbReference type="InterPro" id="IPR018164">
    <property type="entry name" value="Ala-tRNA-synth_IIc_N"/>
</dbReference>
<dbReference type="InterPro" id="IPR050058">
    <property type="entry name" value="Ala-tRNA_ligase"/>
</dbReference>
<dbReference type="InterPro" id="IPR023033">
    <property type="entry name" value="Ala_tRNA_ligase_euk/bac"/>
</dbReference>
<dbReference type="InterPro" id="IPR003156">
    <property type="entry name" value="DHHA1_dom"/>
</dbReference>
<dbReference type="InterPro" id="IPR018163">
    <property type="entry name" value="Thr/Ala-tRNA-synth_IIc_edit"/>
</dbReference>
<dbReference type="InterPro" id="IPR009000">
    <property type="entry name" value="Transl_B-barrel_sf"/>
</dbReference>
<dbReference type="InterPro" id="IPR012947">
    <property type="entry name" value="tRNA_SAD"/>
</dbReference>
<dbReference type="NCBIfam" id="TIGR00344">
    <property type="entry name" value="alaS"/>
    <property type="match status" value="1"/>
</dbReference>
<dbReference type="PANTHER" id="PTHR11777:SF9">
    <property type="entry name" value="ALANINE--TRNA LIGASE, CYTOPLASMIC"/>
    <property type="match status" value="1"/>
</dbReference>
<dbReference type="PANTHER" id="PTHR11777">
    <property type="entry name" value="ALANYL-TRNA SYNTHETASE"/>
    <property type="match status" value="1"/>
</dbReference>
<dbReference type="Pfam" id="PF02272">
    <property type="entry name" value="DHHA1"/>
    <property type="match status" value="1"/>
</dbReference>
<dbReference type="Pfam" id="PF01411">
    <property type="entry name" value="tRNA-synt_2c"/>
    <property type="match status" value="1"/>
</dbReference>
<dbReference type="Pfam" id="PF07973">
    <property type="entry name" value="tRNA_SAD"/>
    <property type="match status" value="1"/>
</dbReference>
<dbReference type="PRINTS" id="PR00980">
    <property type="entry name" value="TRNASYNTHALA"/>
</dbReference>
<dbReference type="SMART" id="SM00863">
    <property type="entry name" value="tRNA_SAD"/>
    <property type="match status" value="1"/>
</dbReference>
<dbReference type="SUPFAM" id="SSF55681">
    <property type="entry name" value="Class II aaRS and biotin synthetases"/>
    <property type="match status" value="1"/>
</dbReference>
<dbReference type="SUPFAM" id="SSF101353">
    <property type="entry name" value="Putative anticodon-binding domain of alanyl-tRNA synthetase (AlaRS)"/>
    <property type="match status" value="1"/>
</dbReference>
<dbReference type="SUPFAM" id="SSF55186">
    <property type="entry name" value="ThrRS/AlaRS common domain"/>
    <property type="match status" value="1"/>
</dbReference>
<dbReference type="SUPFAM" id="SSF50447">
    <property type="entry name" value="Translation proteins"/>
    <property type="match status" value="1"/>
</dbReference>
<dbReference type="PROSITE" id="PS50860">
    <property type="entry name" value="AA_TRNA_LIGASE_II_ALA"/>
    <property type="match status" value="1"/>
</dbReference>
<keyword id="KW-0030">Aminoacyl-tRNA synthetase</keyword>
<keyword id="KW-0067">ATP-binding</keyword>
<keyword id="KW-0963">Cytoplasm</keyword>
<keyword id="KW-0436">Ligase</keyword>
<keyword id="KW-0479">Metal-binding</keyword>
<keyword id="KW-0547">Nucleotide-binding</keyword>
<keyword id="KW-0648">Protein biosynthesis</keyword>
<keyword id="KW-0694">RNA-binding</keyword>
<keyword id="KW-0820">tRNA-binding</keyword>
<keyword id="KW-0862">Zinc</keyword>
<proteinExistence type="inferred from homology"/>